<name>H1A03_CYRHA</name>
<feature type="signal peptide" evidence="1">
    <location>
        <begin position="1"/>
        <end position="21"/>
    </location>
</feature>
<feature type="propeptide" id="PRO_0000400498" evidence="11 12">
    <location>
        <begin position="22"/>
        <end position="48"/>
    </location>
</feature>
<feature type="peptide" id="PRO_0000400499" description="Mu-theraphotoxin-Hhn2b 3" evidence="2 4">
    <location>
        <begin position="49"/>
        <end position="81"/>
    </location>
</feature>
<feature type="modified residue" description="Leucine amide" evidence="3">
    <location>
        <position position="81"/>
    </location>
</feature>
<feature type="disulfide bond" evidence="3 5">
    <location>
        <begin position="50"/>
        <end position="65"/>
    </location>
</feature>
<feature type="disulfide bond" evidence="3 5">
    <location>
        <begin position="57"/>
        <end position="70"/>
    </location>
</feature>
<feature type="disulfide bond" evidence="3 5">
    <location>
        <begin position="64"/>
        <end position="77"/>
    </location>
</feature>
<feature type="mutagenesis site" description="No gain of activity against hNav1.7/SCN9A." evidence="5">
    <original>K</original>
    <variation>L</variation>
    <location>
        <position position="51"/>
    </location>
</feature>
<feature type="mutagenesis site" description="Low gain of inhibition activity against hNav1.7/SCN9A (IC(50)=2.7 uM), and gain of binding to anionic POPG liposome. Important gain of inhibition activity (IC(50)=440 nM), and gain of binding to anionic POPG liposome; when associated with S-71." evidence="5">
    <original>G</original>
    <variation>W</variation>
    <location>
        <position position="54"/>
    </location>
</feature>
<feature type="mutagenesis site" description="Low gain of inhibition activity against hNav1.7/SCN9A (IC(50)=4.0 uM) and no change in binding to anionic POPG liposome. Important gain of inhibition activity (IC(50)=440 nM), and gain of binding to anionic POPG liposome; when associated with W-54." evidence="5">
    <original>N</original>
    <variation>S</variation>
    <location>
        <position position="71"/>
    </location>
</feature>
<feature type="mutagenesis site" description="No gain of activity against hNav1.7/SCN9A." evidence="5">
    <original>V</original>
    <variation>W</variation>
    <location>
        <position position="79"/>
    </location>
</feature>
<dbReference type="EMBL" id="GU292855">
    <property type="protein sequence ID" value="ADB56671.1"/>
    <property type="molecule type" value="mRNA"/>
</dbReference>
<dbReference type="BMRB" id="D2Y1X8"/>
<dbReference type="SMR" id="D2Y1X8"/>
<dbReference type="ArachnoServer" id="AS000338">
    <property type="toxin name" value="mu-theraphotoxin-Hhn2b"/>
</dbReference>
<dbReference type="EvolutionaryTrace" id="D2Y1X8"/>
<dbReference type="GO" id="GO:0005576">
    <property type="term" value="C:extracellular region"/>
    <property type="evidence" value="ECO:0007669"/>
    <property type="project" value="UniProtKB-SubCell"/>
</dbReference>
<dbReference type="GO" id="GO:0008200">
    <property type="term" value="F:ion channel inhibitor activity"/>
    <property type="evidence" value="ECO:0007669"/>
    <property type="project" value="InterPro"/>
</dbReference>
<dbReference type="GO" id="GO:0017080">
    <property type="term" value="F:sodium channel regulator activity"/>
    <property type="evidence" value="ECO:0007669"/>
    <property type="project" value="UniProtKB-KW"/>
</dbReference>
<dbReference type="GO" id="GO:0090729">
    <property type="term" value="F:toxin activity"/>
    <property type="evidence" value="ECO:0007669"/>
    <property type="project" value="UniProtKB-KW"/>
</dbReference>
<dbReference type="InterPro" id="IPR011696">
    <property type="entry name" value="Huwentoxin-1"/>
</dbReference>
<dbReference type="InterPro" id="IPR013140">
    <property type="entry name" value="Huwentoxin_CS1"/>
</dbReference>
<dbReference type="Pfam" id="PF07740">
    <property type="entry name" value="Toxin_12"/>
    <property type="match status" value="1"/>
</dbReference>
<dbReference type="SUPFAM" id="SSF57059">
    <property type="entry name" value="omega toxin-like"/>
    <property type="match status" value="1"/>
</dbReference>
<dbReference type="PROSITE" id="PS60021">
    <property type="entry name" value="HWTX_1"/>
    <property type="match status" value="1"/>
</dbReference>
<accession>D2Y1X8</accession>
<accession>P83591</accession>
<sequence>MKASMFLALAGLVLLFVVCYASESEEKEFPRELISKIFAVDDFKGEVRECKGFGKSCVPGKNECCSGYACNSRDKWCKVLLGK</sequence>
<protein>
    <recommendedName>
        <fullName evidence="13">Mu-theraphotoxin-Hhn2b 3</fullName>
        <shortName evidence="9">Mu-TRTX-Hhn2b</shortName>
    </recommendedName>
    <alternativeName>
        <fullName evidence="6 7 8">Hainantoxin-I</fullName>
        <shortName evidence="6 7 8">HnTx-I</shortName>
    </alternativeName>
    <alternativeName>
        <fullName>Peptide F5-19.03</fullName>
    </alternativeName>
</protein>
<reference key="1">
    <citation type="journal article" date="2010" name="J. Proteome Res.">
        <title>Molecular diversification of peptide toxins from the tarantula Haplopelma hainanum (Ornithoctonus hainana) venom based on transcriptomic, peptidomic, and genomic analyses.</title>
        <authorList>
            <person name="Tang X."/>
            <person name="Zhang Y."/>
            <person name="Hu W."/>
            <person name="Xu D."/>
            <person name="Tao H."/>
            <person name="Yang X."/>
            <person name="Li Y."/>
            <person name="Jiang L."/>
            <person name="Liang S."/>
        </authorList>
    </citation>
    <scope>NUCLEOTIDE SEQUENCE [LARGE SCALE MRNA]</scope>
    <scope>PROTEIN SEQUENCE OF 49-81</scope>
    <scope>IDENTIFICATION BY MASS SPECTROMETRY</scope>
    <source>
        <tissue>Venom</tissue>
        <tissue>Venom gland</tissue>
    </source>
</reference>
<reference key="2">
    <citation type="journal article" date="2003" name="Toxicon">
        <title>Purification and characterization of Hainantoxin-V, a tetrodotoxin-sensitive sodium channel inhibitor from the venom of the spider Selenocosmia hainana.</title>
        <authorList>
            <person name="Xiao Y.-C."/>
            <person name="Liang S.-P."/>
        </authorList>
    </citation>
    <scope>PROTEIN SEQUENCE OF 49-81</scope>
    <source>
        <tissue>Venom</tissue>
    </source>
</reference>
<reference key="3">
    <citation type="journal article" date="2003" name="FEBS Lett.">
        <title>Function and solution structure of hainantoxin-I, a novel insect sodium channel inhibitor from the Chinese bird spider Selenocosmia hainana.</title>
        <authorList>
            <person name="Li D.-L."/>
            <person name="Xiao Y.-C."/>
            <person name="Hu W.-J."/>
            <person name="Xie J.-Y."/>
            <person name="Bosmans F."/>
            <person name="Tytgat J."/>
            <person name="Liang S.-P."/>
        </authorList>
    </citation>
    <scope>SEQUENCE REVISION TO 78-81</scope>
    <scope>FUNCTION</scope>
    <scope>SUBUNIT</scope>
    <scope>SUBCELLULAR LOCATION</scope>
    <scope>MASS SPECTROMETRY</scope>
    <scope>DISULFIDE BONDS</scope>
    <scope>AMIDATION AT LEU-81</scope>
    <scope>STRUCTURE BY NMR OF 48-81</scope>
    <source>
        <tissue>Venom</tissue>
    </source>
</reference>
<reference key="4">
    <citation type="journal article" date="2015" name="Mol. Pharmacol.">
        <title>Rational engineering defines a molecular switch that is essential for activity of spider-venom peptides against the analgesics target NaV1.7.</title>
        <authorList>
            <person name="Klint J.K."/>
            <person name="Chin Y.K."/>
            <person name="Mobli M."/>
        </authorList>
    </citation>
    <scope>STRUCTURE BY NMR OF 48-81 OF WILD-TYPE AND G54W/N71S MUTANT</scope>
    <scope>FUNCTION</scope>
    <scope>RECOMBINANT EXPRESSION OF 48-81</scope>
    <scope>MUTAGENESIS OF LYS-51; GLY-54; ASN-71 AND VAL-79</scope>
</reference>
<keyword id="KW-0027">Amidation</keyword>
<keyword id="KW-0903">Direct protein sequencing</keyword>
<keyword id="KW-1015">Disulfide bond</keyword>
<keyword id="KW-0872">Ion channel impairing toxin</keyword>
<keyword id="KW-0960">Knottin</keyword>
<keyword id="KW-0528">Neurotoxin</keyword>
<keyword id="KW-0964">Secreted</keyword>
<keyword id="KW-0732">Signal</keyword>
<keyword id="KW-0800">Toxin</keyword>
<keyword id="KW-0738">Voltage-gated sodium channel impairing toxin</keyword>
<organism>
    <name type="scientific">Cyriopagopus hainanus</name>
    <name type="common">Chinese bird spider</name>
    <name type="synonym">Haplopelma hainanum</name>
    <dbReference type="NCBI Taxonomy" id="209901"/>
    <lineage>
        <taxon>Eukaryota</taxon>
        <taxon>Metazoa</taxon>
        <taxon>Ecdysozoa</taxon>
        <taxon>Arthropoda</taxon>
        <taxon>Chelicerata</taxon>
        <taxon>Arachnida</taxon>
        <taxon>Araneae</taxon>
        <taxon>Mygalomorphae</taxon>
        <taxon>Theraphosidae</taxon>
        <taxon>Haplopelma</taxon>
    </lineage>
</organism>
<evidence type="ECO:0000255" key="1"/>
<evidence type="ECO:0000269" key="2">
    <source>
    </source>
</evidence>
<evidence type="ECO:0000269" key="3">
    <source>
    </source>
</evidence>
<evidence type="ECO:0000269" key="4">
    <source>
    </source>
</evidence>
<evidence type="ECO:0000269" key="5">
    <source>
    </source>
</evidence>
<evidence type="ECO:0000303" key="6">
    <source>
    </source>
</evidence>
<evidence type="ECO:0000303" key="7">
    <source>
    </source>
</evidence>
<evidence type="ECO:0000303" key="8">
    <source>
    </source>
</evidence>
<evidence type="ECO:0000303" key="9">
    <source>
    </source>
</evidence>
<evidence type="ECO:0000305" key="10"/>
<evidence type="ECO:0000305" key="11">
    <source>
    </source>
</evidence>
<evidence type="ECO:0000305" key="12">
    <source>
    </source>
</evidence>
<evidence type="ECO:0000305" key="13">
    <source>
    </source>
</evidence>
<comment type="function">
    <text evidence="3 5">Weakly blocks the rat SCN2A/SCN1B (Nav1.2/beta-1) sodium channel (IC(50)=68 uM) and the insect sodium channel para/tipE (IC(50)=4.3 uM), without altering the activation or inactivation kinetics (depressant toxin).</text>
</comment>
<comment type="subunit">
    <text evidence="3">Monomer.</text>
</comment>
<comment type="subcellular location">
    <subcellularLocation>
        <location evidence="3">Secreted</location>
    </subcellularLocation>
</comment>
<comment type="tissue specificity">
    <text evidence="3">Expressed by the venom gland.</text>
</comment>
<comment type="domain">
    <text evidence="3 5">The presence of a 'disulfide through disulfide knot' structurally defines this protein as a knottin.</text>
</comment>
<comment type="mass spectrometry"/>
<comment type="miscellaneous">
    <text evidence="3 5">Negative results: has no effect on mammalian SCN3A/SCN1B (Nav1.3/beta-1), SCN4A (Nav1.4), SCN5A/SCN1B (Nav1.5/beta-1), and SCN9A/SCN1B (Nav1.7/beta-1) (PubMed:14675784, PubMed:26429937). Has also no effect on sodium subtypes in rat DRG neurons containing Nav1.1/SCN1A, Nav1.6/SCN8A, Nav1.7/SCN9A, Nav1.8/SCN10A and Nav1.9/SCN11A (PubMed:14675784).</text>
</comment>
<comment type="miscellaneous">
    <text evidence="13">Klint et al., 2015 worked with a recombinant peptide N-terminally extended by an Ala residue (AECKGFGKSCVPGKNECCSGYACNSRDKWCKVLL).</text>
</comment>
<comment type="similarity">
    <text evidence="10">Belongs to the neurotoxin 10 (Hwtx-1) family. 14 (Hntx-1) subfamily.</text>
</comment>
<proteinExistence type="evidence at protein level"/>